<dbReference type="EMBL" id="AP009351">
    <property type="protein sequence ID" value="BAF68411.1"/>
    <property type="molecule type" value="Genomic_DNA"/>
</dbReference>
<dbReference type="RefSeq" id="WP_001140799.1">
    <property type="nucleotide sequence ID" value="NZ_JBBIAE010000006.1"/>
</dbReference>
<dbReference type="SMR" id="A6QJ79"/>
<dbReference type="KEGG" id="sae:NWMN_2139"/>
<dbReference type="HOGENOM" id="CLU_139869_3_0_9"/>
<dbReference type="Proteomes" id="UP000006386">
    <property type="component" value="Chromosome"/>
</dbReference>
<dbReference type="GO" id="GO:0015935">
    <property type="term" value="C:small ribosomal subunit"/>
    <property type="evidence" value="ECO:0007669"/>
    <property type="project" value="TreeGrafter"/>
</dbReference>
<dbReference type="GO" id="GO:0019843">
    <property type="term" value="F:rRNA binding"/>
    <property type="evidence" value="ECO:0007669"/>
    <property type="project" value="UniProtKB-UniRule"/>
</dbReference>
<dbReference type="GO" id="GO:0003735">
    <property type="term" value="F:structural constituent of ribosome"/>
    <property type="evidence" value="ECO:0007669"/>
    <property type="project" value="InterPro"/>
</dbReference>
<dbReference type="GO" id="GO:0008270">
    <property type="term" value="F:zinc ion binding"/>
    <property type="evidence" value="ECO:0007669"/>
    <property type="project" value="UniProtKB-UniRule"/>
</dbReference>
<dbReference type="GO" id="GO:0006412">
    <property type="term" value="P:translation"/>
    <property type="evidence" value="ECO:0007669"/>
    <property type="project" value="UniProtKB-UniRule"/>
</dbReference>
<dbReference type="FunFam" id="4.10.830.10:FF:000001">
    <property type="entry name" value="30S ribosomal protein S14 type Z"/>
    <property type="match status" value="1"/>
</dbReference>
<dbReference type="Gene3D" id="4.10.830.10">
    <property type="entry name" value="30s Ribosomal Protein S14, Chain N"/>
    <property type="match status" value="1"/>
</dbReference>
<dbReference type="HAMAP" id="MF_01364_B">
    <property type="entry name" value="Ribosomal_uS14_2_B"/>
    <property type="match status" value="1"/>
</dbReference>
<dbReference type="InterPro" id="IPR001209">
    <property type="entry name" value="Ribosomal_uS14"/>
</dbReference>
<dbReference type="InterPro" id="IPR023053">
    <property type="entry name" value="Ribosomal_uS14_bact"/>
</dbReference>
<dbReference type="InterPro" id="IPR018271">
    <property type="entry name" value="Ribosomal_uS14_CS"/>
</dbReference>
<dbReference type="InterPro" id="IPR043140">
    <property type="entry name" value="Ribosomal_uS14_sf"/>
</dbReference>
<dbReference type="NCBIfam" id="NF005974">
    <property type="entry name" value="PRK08061.1"/>
    <property type="match status" value="1"/>
</dbReference>
<dbReference type="PANTHER" id="PTHR19836">
    <property type="entry name" value="30S RIBOSOMAL PROTEIN S14"/>
    <property type="match status" value="1"/>
</dbReference>
<dbReference type="PANTHER" id="PTHR19836:SF26">
    <property type="entry name" value="SMALL RIBOSOMAL SUBUNIT PROTEIN US14B"/>
    <property type="match status" value="1"/>
</dbReference>
<dbReference type="Pfam" id="PF00253">
    <property type="entry name" value="Ribosomal_S14"/>
    <property type="match status" value="1"/>
</dbReference>
<dbReference type="SUPFAM" id="SSF57716">
    <property type="entry name" value="Glucocorticoid receptor-like (DNA-binding domain)"/>
    <property type="match status" value="1"/>
</dbReference>
<dbReference type="PROSITE" id="PS00527">
    <property type="entry name" value="RIBOSOMAL_S14"/>
    <property type="match status" value="1"/>
</dbReference>
<proteinExistence type="inferred from homology"/>
<organism>
    <name type="scientific">Staphylococcus aureus (strain Newman)</name>
    <dbReference type="NCBI Taxonomy" id="426430"/>
    <lineage>
        <taxon>Bacteria</taxon>
        <taxon>Bacillati</taxon>
        <taxon>Bacillota</taxon>
        <taxon>Bacilli</taxon>
        <taxon>Bacillales</taxon>
        <taxon>Staphylococcaceae</taxon>
        <taxon>Staphylococcus</taxon>
    </lineage>
</organism>
<gene>
    <name evidence="1" type="primary">rpsZ</name>
    <name evidence="1" type="synonym">rpsN</name>
    <name type="ordered locus">NWMN_2139</name>
</gene>
<evidence type="ECO:0000255" key="1">
    <source>
        <dbReference type="HAMAP-Rule" id="MF_01364"/>
    </source>
</evidence>
<evidence type="ECO:0000305" key="2"/>
<protein>
    <recommendedName>
        <fullName evidence="1">Small ribosomal subunit protein uS14B</fullName>
    </recommendedName>
    <alternativeName>
        <fullName evidence="2">30S ribosomal protein S14 type Z</fullName>
    </alternativeName>
</protein>
<sequence>MAKTSMVAKQQKKQKYAVREYTRCERCGRPHSVYRKFKLCRICFRELAYKGQIPGVRKASW</sequence>
<name>RS14Z_STAAE</name>
<feature type="chain" id="PRO_1000073398" description="Small ribosomal subunit protein uS14B">
    <location>
        <begin position="1"/>
        <end position="61"/>
    </location>
</feature>
<feature type="binding site" evidence="1">
    <location>
        <position position="24"/>
    </location>
    <ligand>
        <name>Zn(2+)</name>
        <dbReference type="ChEBI" id="CHEBI:29105"/>
    </ligand>
</feature>
<feature type="binding site" evidence="1">
    <location>
        <position position="27"/>
    </location>
    <ligand>
        <name>Zn(2+)</name>
        <dbReference type="ChEBI" id="CHEBI:29105"/>
    </ligand>
</feature>
<feature type="binding site" evidence="1">
    <location>
        <position position="40"/>
    </location>
    <ligand>
        <name>Zn(2+)</name>
        <dbReference type="ChEBI" id="CHEBI:29105"/>
    </ligand>
</feature>
<feature type="binding site" evidence="1">
    <location>
        <position position="43"/>
    </location>
    <ligand>
        <name>Zn(2+)</name>
        <dbReference type="ChEBI" id="CHEBI:29105"/>
    </ligand>
</feature>
<keyword id="KW-0479">Metal-binding</keyword>
<keyword id="KW-0687">Ribonucleoprotein</keyword>
<keyword id="KW-0689">Ribosomal protein</keyword>
<keyword id="KW-0694">RNA-binding</keyword>
<keyword id="KW-0699">rRNA-binding</keyword>
<keyword id="KW-0862">Zinc</keyword>
<accession>A6QJ79</accession>
<comment type="function">
    <text evidence="1">Binds 16S rRNA, required for the assembly of 30S particles and may also be responsible for determining the conformation of the 16S rRNA at the A site.</text>
</comment>
<comment type="cofactor">
    <cofactor evidence="1">
        <name>Zn(2+)</name>
        <dbReference type="ChEBI" id="CHEBI:29105"/>
    </cofactor>
    <text evidence="1">Binds 1 zinc ion per subunit.</text>
</comment>
<comment type="subunit">
    <text evidence="1">Part of the 30S ribosomal subunit. Contacts proteins S3 and S10.</text>
</comment>
<comment type="similarity">
    <text evidence="1">Belongs to the universal ribosomal protein uS14 family. Zinc-binding uS14 subfamily.</text>
</comment>
<reference key="1">
    <citation type="journal article" date="2008" name="J. Bacteriol.">
        <title>Genome sequence of Staphylococcus aureus strain Newman and comparative analysis of staphylococcal genomes: polymorphism and evolution of two major pathogenicity islands.</title>
        <authorList>
            <person name="Baba T."/>
            <person name="Bae T."/>
            <person name="Schneewind O."/>
            <person name="Takeuchi F."/>
            <person name="Hiramatsu K."/>
        </authorList>
    </citation>
    <scope>NUCLEOTIDE SEQUENCE [LARGE SCALE GENOMIC DNA]</scope>
    <source>
        <strain>Newman</strain>
    </source>
</reference>